<sequence length="188" mass="21399">MSKKSNKNLAFSLLGLIISMVLLSFASVPIYNLFCKVTGYGGTTAKETVSVYSKVKGTKPIIIEFDANVDKDLPWRFIPRQQRVQIVPGQNTLVFYETENLSDNDIIGTSVYNVTPNKAGKYFVKIHCFCFEEQLLKAGERVLMPVTFYIDKDFELDPEMQDIKVLTLSYSFFKVREMSSLRGNYVSN</sequence>
<evidence type="ECO:0000255" key="1">
    <source>
        <dbReference type="HAMAP-Rule" id="MF_00155"/>
    </source>
</evidence>
<feature type="chain" id="PRO_0000206040" description="Cytochrome c oxidase assembly protein CtaG">
    <location>
        <begin position="1"/>
        <end position="188"/>
    </location>
</feature>
<feature type="topological domain" description="Cytoplasmic" evidence="1">
    <location>
        <begin position="1"/>
        <end position="8"/>
    </location>
</feature>
<feature type="transmembrane region" description="Helical; Signal-anchor for type II membrane protein" evidence="1">
    <location>
        <begin position="9"/>
        <end position="31"/>
    </location>
</feature>
<feature type="topological domain" description="Periplasmic" evidence="1">
    <location>
        <begin position="32"/>
        <end position="188"/>
    </location>
</feature>
<keyword id="KW-0997">Cell inner membrane</keyword>
<keyword id="KW-1003">Cell membrane</keyword>
<keyword id="KW-0186">Copper</keyword>
<keyword id="KW-0472">Membrane</keyword>
<keyword id="KW-0735">Signal-anchor</keyword>
<keyword id="KW-0812">Transmembrane</keyword>
<keyword id="KW-1133">Transmembrane helix</keyword>
<reference key="1">
    <citation type="journal article" date="2001" name="Science">
        <title>Mechanisms of evolution in Rickettsia conorii and R. prowazekii.</title>
        <authorList>
            <person name="Ogata H."/>
            <person name="Audic S."/>
            <person name="Renesto-Audiffren P."/>
            <person name="Fournier P.-E."/>
            <person name="Barbe V."/>
            <person name="Samson D."/>
            <person name="Roux V."/>
            <person name="Cossart P."/>
            <person name="Weissenbach J."/>
            <person name="Claverie J.-M."/>
            <person name="Raoult D."/>
        </authorList>
    </citation>
    <scope>NUCLEOTIDE SEQUENCE [LARGE SCALE GENOMIC DNA]</scope>
    <source>
        <strain>ATCC VR-613 / Malish 7</strain>
    </source>
</reference>
<gene>
    <name evidence="1" type="primary">ctaG</name>
    <name type="synonym">cox11</name>
    <name type="ordered locus">RC0408</name>
</gene>
<accession>Q92IL2</accession>
<comment type="function">
    <text evidence="1">Exerts its effect at some terminal stage of cytochrome c oxidase synthesis, probably by being involved in the insertion of the copper B into subunit I.</text>
</comment>
<comment type="subcellular location">
    <subcellularLocation>
        <location evidence="1">Cell inner membrane</location>
        <topology evidence="1">Single-pass type II membrane protein</topology>
        <orientation evidence="1">Periplasmic side</orientation>
    </subcellularLocation>
</comment>
<comment type="similarity">
    <text evidence="1">Belongs to the COX11/CtaG family.</text>
</comment>
<protein>
    <recommendedName>
        <fullName evidence="1">Cytochrome c oxidase assembly protein CtaG</fullName>
    </recommendedName>
</protein>
<name>COXZ_RICCN</name>
<dbReference type="EMBL" id="AE006914">
    <property type="protein sequence ID" value="AAL02946.1"/>
    <property type="molecule type" value="Genomic_DNA"/>
</dbReference>
<dbReference type="PIR" id="H97750">
    <property type="entry name" value="H97750"/>
</dbReference>
<dbReference type="RefSeq" id="WP_004996151.1">
    <property type="nucleotide sequence ID" value="NC_003103.1"/>
</dbReference>
<dbReference type="SMR" id="Q92IL2"/>
<dbReference type="KEGG" id="rco:RC0408"/>
<dbReference type="HOGENOM" id="CLU_045000_5_0_5"/>
<dbReference type="Proteomes" id="UP000000816">
    <property type="component" value="Chromosome"/>
</dbReference>
<dbReference type="GO" id="GO:0005886">
    <property type="term" value="C:plasma membrane"/>
    <property type="evidence" value="ECO:0007669"/>
    <property type="project" value="UniProtKB-SubCell"/>
</dbReference>
<dbReference type="GO" id="GO:0005507">
    <property type="term" value="F:copper ion binding"/>
    <property type="evidence" value="ECO:0007669"/>
    <property type="project" value="InterPro"/>
</dbReference>
<dbReference type="GO" id="GO:0008535">
    <property type="term" value="P:respiratory chain complex IV assembly"/>
    <property type="evidence" value="ECO:0007669"/>
    <property type="project" value="UniProtKB-UniRule"/>
</dbReference>
<dbReference type="FunFam" id="2.60.370.10:FF:000001">
    <property type="entry name" value="COX11 cytochrome c oxidase assembly homolog"/>
    <property type="match status" value="1"/>
</dbReference>
<dbReference type="Gene3D" id="2.60.370.10">
    <property type="entry name" value="Ctag/Cox11"/>
    <property type="match status" value="1"/>
</dbReference>
<dbReference type="HAMAP" id="MF_00155">
    <property type="entry name" value="CtaG"/>
    <property type="match status" value="1"/>
</dbReference>
<dbReference type="InterPro" id="IPR023471">
    <property type="entry name" value="CtaG/Cox11_dom_sf"/>
</dbReference>
<dbReference type="InterPro" id="IPR007533">
    <property type="entry name" value="Cyt_c_oxidase_assmbl_CtaG"/>
</dbReference>
<dbReference type="NCBIfam" id="NF003465">
    <property type="entry name" value="PRK05089.1"/>
    <property type="match status" value="1"/>
</dbReference>
<dbReference type="PANTHER" id="PTHR21320:SF3">
    <property type="entry name" value="CYTOCHROME C OXIDASE ASSEMBLY PROTEIN COX11, MITOCHONDRIAL-RELATED"/>
    <property type="match status" value="1"/>
</dbReference>
<dbReference type="PANTHER" id="PTHR21320">
    <property type="entry name" value="CYTOCHROME C OXIDASE ASSEMBLY PROTEIN COX11-RELATED"/>
    <property type="match status" value="1"/>
</dbReference>
<dbReference type="Pfam" id="PF04442">
    <property type="entry name" value="CtaG_Cox11"/>
    <property type="match status" value="1"/>
</dbReference>
<dbReference type="PIRSF" id="PIRSF005413">
    <property type="entry name" value="COX11"/>
    <property type="match status" value="1"/>
</dbReference>
<dbReference type="SUPFAM" id="SSF110111">
    <property type="entry name" value="Ctag/Cox11"/>
    <property type="match status" value="1"/>
</dbReference>
<proteinExistence type="inferred from homology"/>
<organism>
    <name type="scientific">Rickettsia conorii (strain ATCC VR-613 / Malish 7)</name>
    <dbReference type="NCBI Taxonomy" id="272944"/>
    <lineage>
        <taxon>Bacteria</taxon>
        <taxon>Pseudomonadati</taxon>
        <taxon>Pseudomonadota</taxon>
        <taxon>Alphaproteobacteria</taxon>
        <taxon>Rickettsiales</taxon>
        <taxon>Rickettsiaceae</taxon>
        <taxon>Rickettsieae</taxon>
        <taxon>Rickettsia</taxon>
        <taxon>spotted fever group</taxon>
    </lineage>
</organism>